<proteinExistence type="evidence at protein level"/>
<accession>P80278</accession>
<dbReference type="GO" id="GO:0005576">
    <property type="term" value="C:extracellular region"/>
    <property type="evidence" value="ECO:0007669"/>
    <property type="project" value="UniProtKB-SubCell"/>
</dbReference>
<dbReference type="GO" id="GO:0042742">
    <property type="term" value="P:defense response to bacterium"/>
    <property type="evidence" value="ECO:0007669"/>
    <property type="project" value="UniProtKB-KW"/>
</dbReference>
<dbReference type="GO" id="GO:0050832">
    <property type="term" value="P:defense response to fungus"/>
    <property type="evidence" value="ECO:0007669"/>
    <property type="project" value="UniProtKB-KW"/>
</dbReference>
<dbReference type="GO" id="GO:0031640">
    <property type="term" value="P:killing of cells of another organism"/>
    <property type="evidence" value="ECO:0007669"/>
    <property type="project" value="UniProtKB-KW"/>
</dbReference>
<dbReference type="InterPro" id="IPR022731">
    <property type="entry name" value="Dermaseptin_dom"/>
</dbReference>
<dbReference type="Pfam" id="PF12121">
    <property type="entry name" value="DD_K"/>
    <property type="match status" value="1"/>
</dbReference>
<reference key="1">
    <citation type="journal article" date="1994" name="Eur. J. Biochem.">
        <title>Isolation and structure of novel defensive peptides from frog skin.</title>
        <authorList>
            <person name="Mor A."/>
            <person name="Nicolas P."/>
        </authorList>
    </citation>
    <scope>PROTEIN SEQUENCE</scope>
    <scope>SUBCELLULAR LOCATION</scope>
    <source>
        <tissue>Skin secretion</tissue>
    </source>
</reference>
<reference key="2">
    <citation type="journal article" date="2008" name="Peptides">
        <title>A consistent nomenclature of antimicrobial peptides isolated from frogs of the subfamily Phyllomedusinae.</title>
        <authorList>
            <person name="Amiche M."/>
            <person name="Ladram A."/>
            <person name="Nicolas P."/>
        </authorList>
    </citation>
    <scope>NOMENCLATURE</scope>
</reference>
<keyword id="KW-0878">Amphibian defense peptide</keyword>
<keyword id="KW-0044">Antibiotic</keyword>
<keyword id="KW-0929">Antimicrobial</keyword>
<keyword id="KW-0903">Direct protein sequencing</keyword>
<keyword id="KW-0295">Fungicide</keyword>
<keyword id="KW-0964">Secreted</keyword>
<protein>
    <recommendedName>
        <fullName evidence="3">Dermaseptin-S2</fullName>
        <shortName evidence="3">DRS-S2</shortName>
    </recommendedName>
    <alternativeName>
        <fullName evidence="4">Dermaseptin II</fullName>
        <shortName evidence="4">DS II</shortName>
    </alternativeName>
    <alternativeName>
        <fullName>Dermaseptin-2</fullName>
        <shortName>DS2</shortName>
    </alternativeName>
</protein>
<comment type="function">
    <text evidence="1 2 5">Potent antimicrobial peptide with activity against bacteria and protozoa (By similarity). Also has activity against fungi (PubMed:8306981). Probably acts by disturbing membrane functions with its amphipathic structure (Probable).</text>
</comment>
<comment type="subcellular location">
    <subcellularLocation>
        <location evidence="2">Secreted</location>
    </subcellularLocation>
</comment>
<comment type="tissue specificity">
    <text evidence="6">Expressed by the skin glands.</text>
</comment>
<comment type="similarity">
    <text evidence="5">Belongs to the frog skin active peptide (FSAP) family. Dermaseptin subfamily.</text>
</comment>
<comment type="online information" name="The antimicrobial peptide database">
    <link uri="https://wangapd3.com/database/query_output.php?ID=0158"/>
</comment>
<sequence length="34" mass="3473">ALWFTMLKKLGTMALHAGKAALGAAANTISQGTQ</sequence>
<feature type="peptide" id="PRO_0000044733" description="Dermaseptin-S2" evidence="2">
    <location>
        <begin position="1"/>
        <end position="34"/>
    </location>
</feature>
<name>DRS2_PHYSA</name>
<evidence type="ECO:0000250" key="1">
    <source>
        <dbReference type="UniProtKB" id="P24302"/>
    </source>
</evidence>
<evidence type="ECO:0000269" key="2">
    <source>
    </source>
</evidence>
<evidence type="ECO:0000303" key="3">
    <source>
    </source>
</evidence>
<evidence type="ECO:0000303" key="4">
    <source>
    </source>
</evidence>
<evidence type="ECO:0000305" key="5"/>
<evidence type="ECO:0000305" key="6">
    <source>
    </source>
</evidence>
<organism>
    <name type="scientific">Phyllomedusa sauvagei</name>
    <name type="common">Sauvage's leaf frog</name>
    <dbReference type="NCBI Taxonomy" id="8395"/>
    <lineage>
        <taxon>Eukaryota</taxon>
        <taxon>Metazoa</taxon>
        <taxon>Chordata</taxon>
        <taxon>Craniata</taxon>
        <taxon>Vertebrata</taxon>
        <taxon>Euteleostomi</taxon>
        <taxon>Amphibia</taxon>
        <taxon>Batrachia</taxon>
        <taxon>Anura</taxon>
        <taxon>Neobatrachia</taxon>
        <taxon>Hyloidea</taxon>
        <taxon>Hylidae</taxon>
        <taxon>Phyllomedusinae</taxon>
        <taxon>Phyllomedusa</taxon>
    </lineage>
</organism>